<proteinExistence type="inferred from homology"/>
<organism>
    <name type="scientific">Mycolicibacterium paratuberculosis (strain ATCC BAA-968 / K-10)</name>
    <name type="common">Mycobacterium paratuberculosis</name>
    <dbReference type="NCBI Taxonomy" id="262316"/>
    <lineage>
        <taxon>Bacteria</taxon>
        <taxon>Bacillati</taxon>
        <taxon>Actinomycetota</taxon>
        <taxon>Actinomycetes</taxon>
        <taxon>Mycobacteriales</taxon>
        <taxon>Mycobacteriaceae</taxon>
        <taxon>Mycobacterium</taxon>
        <taxon>Mycobacterium avium complex (MAC)</taxon>
    </lineage>
</organism>
<sequence>MGSADERRFEVLRAIVADFVATKEPIGSKTLVERHNLGVSSATVRNDMAVLEAEGYITQPHTSSGRVPTEKGYREFVDRLDDVKPLSAAERRAIQNFLESGVDLDDVLRRAVRLLAQLTRQVAIVQYPTLSSSTVRHLEVIALTPARLLMVVITDSGRVDQRIVELGDVIDDHELSRLREMLGQALVGKKLSAASVAVADLAEQLRSPDGLGDAVGRSATVLLESLVEHSEERLLMGGTANLTRNAADFGGSLRSILEALEEQVVVLRLLAAQQEAGKVTVRIGHETAAEQMVGTSMVTTAYGTSDTVYGGMGVLGPTRMDYPGTIASVAAVAMYIGEVLGAR</sequence>
<reference key="1">
    <citation type="journal article" date="2005" name="Proc. Natl. Acad. Sci. U.S.A.">
        <title>The complete genome sequence of Mycobacterium avium subspecies paratuberculosis.</title>
        <authorList>
            <person name="Li L."/>
            <person name="Bannantine J.P."/>
            <person name="Zhang Q."/>
            <person name="Amonsin A."/>
            <person name="May B.J."/>
            <person name="Alt D."/>
            <person name="Banerji N."/>
            <person name="Kanjilal S."/>
            <person name="Kapur V."/>
        </authorList>
    </citation>
    <scope>NUCLEOTIDE SEQUENCE [LARGE SCALE GENOMIC DNA]</scope>
    <source>
        <strain>ATCC BAA-968 / K-10</strain>
    </source>
</reference>
<comment type="function">
    <text evidence="1">Negative regulator of class I heat shock genes (grpE-dnaK-dnaJ and groELS operons). Prevents heat-shock induction of these operons.</text>
</comment>
<comment type="similarity">
    <text evidence="1">Belongs to the HrcA family.</text>
</comment>
<gene>
    <name evidence="1" type="primary">hrcA</name>
    <name type="ordered locus">MAP_2163c</name>
</gene>
<feature type="chain" id="PRO_0000182508" description="Heat-inducible transcription repressor HrcA">
    <location>
        <begin position="1"/>
        <end position="343"/>
    </location>
</feature>
<accession>Q73XZ5</accession>
<name>HRCA_MYCPA</name>
<dbReference type="EMBL" id="AE016958">
    <property type="protein sequence ID" value="AAS04480.1"/>
    <property type="molecule type" value="Genomic_DNA"/>
</dbReference>
<dbReference type="RefSeq" id="WP_003878336.1">
    <property type="nucleotide sequence ID" value="NZ_CP106873.1"/>
</dbReference>
<dbReference type="SMR" id="Q73XZ5"/>
<dbReference type="STRING" id="262316.MAP_2163c"/>
<dbReference type="KEGG" id="mpa:MAP_2163c"/>
<dbReference type="eggNOG" id="COG1420">
    <property type="taxonomic scope" value="Bacteria"/>
</dbReference>
<dbReference type="HOGENOM" id="CLU_050019_2_0_11"/>
<dbReference type="Proteomes" id="UP000000580">
    <property type="component" value="Chromosome"/>
</dbReference>
<dbReference type="GO" id="GO:0003677">
    <property type="term" value="F:DNA binding"/>
    <property type="evidence" value="ECO:0007669"/>
    <property type="project" value="InterPro"/>
</dbReference>
<dbReference type="GO" id="GO:0045892">
    <property type="term" value="P:negative regulation of DNA-templated transcription"/>
    <property type="evidence" value="ECO:0007669"/>
    <property type="project" value="UniProtKB-UniRule"/>
</dbReference>
<dbReference type="FunFam" id="1.10.10.10:FF:000049">
    <property type="entry name" value="Heat-inducible transcription repressor HrcA"/>
    <property type="match status" value="1"/>
</dbReference>
<dbReference type="FunFam" id="3.30.390.60:FF:000003">
    <property type="entry name" value="Heat-inducible transcription repressor HrcA"/>
    <property type="match status" value="1"/>
</dbReference>
<dbReference type="Gene3D" id="3.30.450.40">
    <property type="match status" value="1"/>
</dbReference>
<dbReference type="Gene3D" id="3.30.390.60">
    <property type="entry name" value="Heat-inducible transcription repressor hrca homolog, domain 3"/>
    <property type="match status" value="1"/>
</dbReference>
<dbReference type="Gene3D" id="1.10.10.10">
    <property type="entry name" value="Winged helix-like DNA-binding domain superfamily/Winged helix DNA-binding domain"/>
    <property type="match status" value="1"/>
</dbReference>
<dbReference type="HAMAP" id="MF_00081">
    <property type="entry name" value="HrcA"/>
    <property type="match status" value="1"/>
</dbReference>
<dbReference type="InterPro" id="IPR029016">
    <property type="entry name" value="GAF-like_dom_sf"/>
</dbReference>
<dbReference type="InterPro" id="IPR002571">
    <property type="entry name" value="HrcA"/>
</dbReference>
<dbReference type="InterPro" id="IPR021153">
    <property type="entry name" value="HrcA_C"/>
</dbReference>
<dbReference type="InterPro" id="IPR036388">
    <property type="entry name" value="WH-like_DNA-bd_sf"/>
</dbReference>
<dbReference type="InterPro" id="IPR036390">
    <property type="entry name" value="WH_DNA-bd_sf"/>
</dbReference>
<dbReference type="InterPro" id="IPR023120">
    <property type="entry name" value="WHTH_transcript_rep_HrcA_IDD"/>
</dbReference>
<dbReference type="NCBIfam" id="TIGR00331">
    <property type="entry name" value="hrcA"/>
    <property type="match status" value="1"/>
</dbReference>
<dbReference type="PANTHER" id="PTHR34824">
    <property type="entry name" value="HEAT-INDUCIBLE TRANSCRIPTION REPRESSOR HRCA"/>
    <property type="match status" value="1"/>
</dbReference>
<dbReference type="PANTHER" id="PTHR34824:SF1">
    <property type="entry name" value="HEAT-INDUCIBLE TRANSCRIPTION REPRESSOR HRCA"/>
    <property type="match status" value="1"/>
</dbReference>
<dbReference type="Pfam" id="PF01628">
    <property type="entry name" value="HrcA"/>
    <property type="match status" value="1"/>
</dbReference>
<dbReference type="PIRSF" id="PIRSF005485">
    <property type="entry name" value="HrcA"/>
    <property type="match status" value="1"/>
</dbReference>
<dbReference type="SUPFAM" id="SSF55781">
    <property type="entry name" value="GAF domain-like"/>
    <property type="match status" value="1"/>
</dbReference>
<dbReference type="SUPFAM" id="SSF46785">
    <property type="entry name" value="Winged helix' DNA-binding domain"/>
    <property type="match status" value="1"/>
</dbReference>
<keyword id="KW-1185">Reference proteome</keyword>
<keyword id="KW-0678">Repressor</keyword>
<keyword id="KW-0346">Stress response</keyword>
<keyword id="KW-0804">Transcription</keyword>
<keyword id="KW-0805">Transcription regulation</keyword>
<evidence type="ECO:0000255" key="1">
    <source>
        <dbReference type="HAMAP-Rule" id="MF_00081"/>
    </source>
</evidence>
<protein>
    <recommendedName>
        <fullName evidence="1">Heat-inducible transcription repressor HrcA</fullName>
    </recommendedName>
</protein>